<gene>
    <name evidence="1" type="primary">erpA</name>
    <name type="ordered locus">SCH_0204</name>
</gene>
<dbReference type="EMBL" id="AE017220">
    <property type="protein sequence ID" value="AAX64110.1"/>
    <property type="status" value="ALT_INIT"/>
    <property type="molecule type" value="Genomic_DNA"/>
</dbReference>
<dbReference type="RefSeq" id="WP_001278668.1">
    <property type="nucleotide sequence ID" value="NC_006905.1"/>
</dbReference>
<dbReference type="SMR" id="Q57T51"/>
<dbReference type="GeneID" id="66754727"/>
<dbReference type="KEGG" id="sec:SCH_0204"/>
<dbReference type="HOGENOM" id="CLU_069054_5_3_6"/>
<dbReference type="Proteomes" id="UP000000538">
    <property type="component" value="Chromosome"/>
</dbReference>
<dbReference type="GO" id="GO:0005829">
    <property type="term" value="C:cytosol"/>
    <property type="evidence" value="ECO:0007669"/>
    <property type="project" value="TreeGrafter"/>
</dbReference>
<dbReference type="GO" id="GO:0051537">
    <property type="term" value="F:2 iron, 2 sulfur cluster binding"/>
    <property type="evidence" value="ECO:0007669"/>
    <property type="project" value="TreeGrafter"/>
</dbReference>
<dbReference type="GO" id="GO:0051539">
    <property type="term" value="F:4 iron, 4 sulfur cluster binding"/>
    <property type="evidence" value="ECO:0007669"/>
    <property type="project" value="TreeGrafter"/>
</dbReference>
<dbReference type="GO" id="GO:0005506">
    <property type="term" value="F:iron ion binding"/>
    <property type="evidence" value="ECO:0007669"/>
    <property type="project" value="UniProtKB-UniRule"/>
</dbReference>
<dbReference type="GO" id="GO:0016226">
    <property type="term" value="P:iron-sulfur cluster assembly"/>
    <property type="evidence" value="ECO:0007669"/>
    <property type="project" value="UniProtKB-UniRule"/>
</dbReference>
<dbReference type="FunFam" id="2.60.300.12:FF:000002">
    <property type="entry name" value="Iron-sulfur cluster insertion protein ErpA"/>
    <property type="match status" value="1"/>
</dbReference>
<dbReference type="Gene3D" id="2.60.300.12">
    <property type="entry name" value="HesB-like domain"/>
    <property type="match status" value="1"/>
</dbReference>
<dbReference type="HAMAP" id="MF_01380">
    <property type="entry name" value="Fe_S_insert_ErpA"/>
    <property type="match status" value="1"/>
</dbReference>
<dbReference type="InterPro" id="IPR000361">
    <property type="entry name" value="FeS_biogenesis"/>
</dbReference>
<dbReference type="InterPro" id="IPR016092">
    <property type="entry name" value="FeS_cluster_insertion"/>
</dbReference>
<dbReference type="InterPro" id="IPR017870">
    <property type="entry name" value="FeS_cluster_insertion_CS"/>
</dbReference>
<dbReference type="InterPro" id="IPR023063">
    <property type="entry name" value="FeS_cluster_insertion_RrpA"/>
</dbReference>
<dbReference type="InterPro" id="IPR035903">
    <property type="entry name" value="HesB-like_dom_sf"/>
</dbReference>
<dbReference type="NCBIfam" id="TIGR00049">
    <property type="entry name" value="iron-sulfur cluster assembly accessory protein"/>
    <property type="match status" value="1"/>
</dbReference>
<dbReference type="NCBIfam" id="NF010147">
    <property type="entry name" value="PRK13623.1"/>
    <property type="match status" value="1"/>
</dbReference>
<dbReference type="PANTHER" id="PTHR43011">
    <property type="entry name" value="IRON-SULFUR CLUSTER ASSEMBLY 2 HOMOLOG, MITOCHONDRIAL"/>
    <property type="match status" value="1"/>
</dbReference>
<dbReference type="PANTHER" id="PTHR43011:SF1">
    <property type="entry name" value="IRON-SULFUR CLUSTER ASSEMBLY 2 HOMOLOG, MITOCHONDRIAL"/>
    <property type="match status" value="1"/>
</dbReference>
<dbReference type="Pfam" id="PF01521">
    <property type="entry name" value="Fe-S_biosyn"/>
    <property type="match status" value="1"/>
</dbReference>
<dbReference type="SUPFAM" id="SSF89360">
    <property type="entry name" value="HesB-like domain"/>
    <property type="match status" value="1"/>
</dbReference>
<dbReference type="PROSITE" id="PS01152">
    <property type="entry name" value="HESB"/>
    <property type="match status" value="1"/>
</dbReference>
<sequence>MSDDVALPLQFTDAAANKVKSLIADEDNPNLKLRVYITGGGCSGFQYGFTFDDQVNEGDMTIEKQGVGLVVDPMSLQYLVGGSVDYTEGLEGSRFIVTNPNAKSTCGCGSSFSI</sequence>
<organism>
    <name type="scientific">Salmonella choleraesuis (strain SC-B67)</name>
    <dbReference type="NCBI Taxonomy" id="321314"/>
    <lineage>
        <taxon>Bacteria</taxon>
        <taxon>Pseudomonadati</taxon>
        <taxon>Pseudomonadota</taxon>
        <taxon>Gammaproteobacteria</taxon>
        <taxon>Enterobacterales</taxon>
        <taxon>Enterobacteriaceae</taxon>
        <taxon>Salmonella</taxon>
    </lineage>
</organism>
<proteinExistence type="inferred from homology"/>
<evidence type="ECO:0000255" key="1">
    <source>
        <dbReference type="HAMAP-Rule" id="MF_01380"/>
    </source>
</evidence>
<evidence type="ECO:0000305" key="2"/>
<name>ERPA_SALCH</name>
<comment type="function">
    <text evidence="1">Required for insertion of 4Fe-4S clusters for at least IspG.</text>
</comment>
<comment type="cofactor">
    <cofactor evidence="1">
        <name>iron-sulfur cluster</name>
        <dbReference type="ChEBI" id="CHEBI:30408"/>
    </cofactor>
    <text evidence="1">Binds 1 iron-sulfur cluster per subunit.</text>
</comment>
<comment type="subunit">
    <text evidence="1">Homodimer.</text>
</comment>
<comment type="similarity">
    <text evidence="1">Belongs to the HesB/IscA family.</text>
</comment>
<comment type="sequence caution" evidence="2">
    <conflict type="erroneous initiation">
        <sequence resource="EMBL-CDS" id="AAX64110"/>
    </conflict>
</comment>
<keyword id="KW-0408">Iron</keyword>
<keyword id="KW-0411">Iron-sulfur</keyword>
<keyword id="KW-0479">Metal-binding</keyword>
<accession>Q57T51</accession>
<protein>
    <recommendedName>
        <fullName evidence="1">Iron-sulfur cluster insertion protein ErpA</fullName>
    </recommendedName>
</protein>
<feature type="chain" id="PRO_0000311543" description="Iron-sulfur cluster insertion protein ErpA">
    <location>
        <begin position="1"/>
        <end position="114"/>
    </location>
</feature>
<feature type="binding site" evidence="1">
    <location>
        <position position="42"/>
    </location>
    <ligand>
        <name>iron-sulfur cluster</name>
        <dbReference type="ChEBI" id="CHEBI:30408"/>
    </ligand>
</feature>
<feature type="binding site" evidence="1">
    <location>
        <position position="106"/>
    </location>
    <ligand>
        <name>iron-sulfur cluster</name>
        <dbReference type="ChEBI" id="CHEBI:30408"/>
    </ligand>
</feature>
<feature type="binding site" evidence="1">
    <location>
        <position position="108"/>
    </location>
    <ligand>
        <name>iron-sulfur cluster</name>
        <dbReference type="ChEBI" id="CHEBI:30408"/>
    </ligand>
</feature>
<reference key="1">
    <citation type="journal article" date="2005" name="Nucleic Acids Res.">
        <title>The genome sequence of Salmonella enterica serovar Choleraesuis, a highly invasive and resistant zoonotic pathogen.</title>
        <authorList>
            <person name="Chiu C.-H."/>
            <person name="Tang P."/>
            <person name="Chu C."/>
            <person name="Hu S."/>
            <person name="Bao Q."/>
            <person name="Yu J."/>
            <person name="Chou Y.-Y."/>
            <person name="Wang H.-S."/>
            <person name="Lee Y.-S."/>
        </authorList>
    </citation>
    <scope>NUCLEOTIDE SEQUENCE [LARGE SCALE GENOMIC DNA]</scope>
    <source>
        <strain>SC-B67</strain>
    </source>
</reference>